<keyword id="KW-0002">3D-structure</keyword>
<keyword id="KW-0249">Electron transport</keyword>
<keyword id="KW-0285">Flavoprotein</keyword>
<keyword id="KW-0288">FMN</keyword>
<keyword id="KW-0813">Transport</keyword>
<organism>
    <name type="scientific">Citrobacter braakii</name>
    <dbReference type="NCBI Taxonomy" id="57706"/>
    <lineage>
        <taxon>Bacteria</taxon>
        <taxon>Pseudomonadati</taxon>
        <taxon>Pseudomonadota</taxon>
        <taxon>Gammaproteobacteria</taxon>
        <taxon>Enterobacterales</taxon>
        <taxon>Enterobacteriaceae</taxon>
        <taxon>Citrobacter</taxon>
        <taxon>Citrobacter freundii complex</taxon>
    </lineage>
</organism>
<proteinExistence type="evidence at protein level"/>
<reference key="1">
    <citation type="journal article" date="2002" name="J. Biol. Chem.">
        <title>Cytochrome P450(cin) (CYP176A), isolation, expression, and characterization.</title>
        <authorList>
            <person name="Hawkes D.B."/>
            <person name="Adams G.W."/>
            <person name="Burlingame A.L."/>
            <person name="Ortiz de Montellano P.R."/>
            <person name="De Voss J.J."/>
        </authorList>
    </citation>
    <scope>NUCLEOTIDE SEQUENCE [GENOMIC DNA]</scope>
</reference>
<reference key="2">
    <citation type="journal article" date="2007" name="J. Biol. Chem.">
        <title>Electron transfer between cytochrome P450cin and its FMN-containing redox partner, cindoxin.</title>
        <authorList>
            <person name="Kimmich N."/>
            <person name="Das A."/>
            <person name="Sevrioukova I."/>
            <person name="Meharenna Y."/>
            <person name="Sligar S.G."/>
            <person name="Poulos T.L."/>
        </authorList>
    </citation>
    <scope>FUNCTION</scope>
</reference>
<reference key="3">
    <citation type="journal article" date="2010" name="ChemBioChem">
        <title>Cloning, expression and purification of cindoxin, an unusual Fmn-containing cytochrome p450 redox partner.</title>
        <authorList>
            <person name="Hawkes D.B."/>
            <person name="Slessor K.E."/>
            <person name="Bernhardt P.V."/>
            <person name="De Voss J.J."/>
        </authorList>
    </citation>
    <scope>FUNCTION</scope>
    <scope>COFACTOR</scope>
    <scope>MASS SPECTROMETRY</scope>
    <scope>REACTION MECHANISM</scope>
</reference>
<sequence length="154" mass="15966">MNALILYGTETGNAEACATTISQVLADTVDTKVHDLADMTPRAMLDSGADLIVFATATYGEGEFAGGGAAFFETLRETKPDLSGLRFAVFGLGDSYYTTFNQAGATAATILASLGGTQVGDTARHDTSSGDDPEETAEEWAREILTALATPAVS</sequence>
<gene>
    <name type="primary">cinC</name>
</gene>
<accession>Q8VQF4</accession>
<name>CINC_CITBR</name>
<protein>
    <recommendedName>
        <fullName>Cindoxin</fullName>
        <shortName>Cdx</shortName>
    </recommendedName>
    <alternativeName>
        <fullName>FMN-containing redox partner</fullName>
    </alternativeName>
</protein>
<dbReference type="EMBL" id="AF456128">
    <property type="protein sequence ID" value="AAL57616.1"/>
    <property type="molecule type" value="Genomic_DNA"/>
</dbReference>
<dbReference type="PDB" id="4OXX">
    <property type="method" value="X-ray"/>
    <property type="resolution" value="1.21 A"/>
    <property type="chains" value="A=1-154"/>
</dbReference>
<dbReference type="PDBsum" id="4OXX"/>
<dbReference type="SMR" id="Q8VQF4"/>
<dbReference type="BioCyc" id="MetaCyc:MONOMER-17204"/>
<dbReference type="EvolutionaryTrace" id="Q8VQF4"/>
<dbReference type="GO" id="GO:0005829">
    <property type="term" value="C:cytosol"/>
    <property type="evidence" value="ECO:0007669"/>
    <property type="project" value="TreeGrafter"/>
</dbReference>
<dbReference type="GO" id="GO:0050660">
    <property type="term" value="F:flavin adenine dinucleotide binding"/>
    <property type="evidence" value="ECO:0007669"/>
    <property type="project" value="TreeGrafter"/>
</dbReference>
<dbReference type="GO" id="GO:0010181">
    <property type="term" value="F:FMN binding"/>
    <property type="evidence" value="ECO:0000314"/>
    <property type="project" value="UniProtKB"/>
</dbReference>
<dbReference type="GO" id="GO:0016491">
    <property type="term" value="F:oxidoreductase activity"/>
    <property type="evidence" value="ECO:0007669"/>
    <property type="project" value="TreeGrafter"/>
</dbReference>
<dbReference type="Gene3D" id="3.40.50.360">
    <property type="match status" value="1"/>
</dbReference>
<dbReference type="InterPro" id="IPR001094">
    <property type="entry name" value="Flavdoxin-like"/>
</dbReference>
<dbReference type="InterPro" id="IPR008254">
    <property type="entry name" value="Flavodoxin/NO_synth"/>
</dbReference>
<dbReference type="InterPro" id="IPR029039">
    <property type="entry name" value="Flavoprotein-like_sf"/>
</dbReference>
<dbReference type="PANTHER" id="PTHR19384">
    <property type="entry name" value="NITRIC OXIDE SYNTHASE-RELATED"/>
    <property type="match status" value="1"/>
</dbReference>
<dbReference type="Pfam" id="PF00258">
    <property type="entry name" value="Flavodoxin_1"/>
    <property type="match status" value="1"/>
</dbReference>
<dbReference type="PRINTS" id="PR00369">
    <property type="entry name" value="FLAVODOXIN"/>
</dbReference>
<dbReference type="SUPFAM" id="SSF52218">
    <property type="entry name" value="Flavoproteins"/>
    <property type="match status" value="1"/>
</dbReference>
<dbReference type="PROSITE" id="PS50902">
    <property type="entry name" value="FLAVODOXIN_LIKE"/>
    <property type="match status" value="1"/>
</dbReference>
<comment type="function">
    <text evidence="2 3">Involved in the degradation of cineol (eucalyptol). The FMN protein, cindoxin, shuttles electrons between the FAD-containing cindoxin reductase (CinB) and 1,8-cineole 2-endo-monooxygenase (CinA).</text>
</comment>
<comment type="cofactor">
    <cofactor evidence="3">
        <name>FMN</name>
        <dbReference type="ChEBI" id="CHEBI:58210"/>
    </cofactor>
</comment>
<comment type="mass spectrometry" mass="15964.0" method="Electrospray" evidence="3"/>
<comment type="similarity">
    <text evidence="4">Belongs to the flavodoxin family.</text>
</comment>
<feature type="chain" id="PRO_0000422768" description="Cindoxin">
    <location>
        <begin position="1"/>
        <end position="154"/>
    </location>
</feature>
<feature type="domain" description="Flavodoxin-like" evidence="1">
    <location>
        <begin position="3"/>
        <end position="145"/>
    </location>
</feature>
<feature type="binding site" evidence="4">
    <location>
        <begin position="9"/>
        <end position="13"/>
    </location>
    <ligand>
        <name>FMN</name>
        <dbReference type="ChEBI" id="CHEBI:58210"/>
    </ligand>
</feature>
<feature type="binding site" evidence="4">
    <location>
        <begin position="89"/>
        <end position="120"/>
    </location>
    <ligand>
        <name>FMN</name>
        <dbReference type="ChEBI" id="CHEBI:58210"/>
    </ligand>
</feature>
<feature type="strand" evidence="5">
    <location>
        <begin position="2"/>
        <end position="8"/>
    </location>
</feature>
<feature type="strand" evidence="5">
    <location>
        <begin position="10"/>
        <end position="12"/>
    </location>
</feature>
<feature type="helix" evidence="5">
    <location>
        <begin position="13"/>
        <end position="25"/>
    </location>
</feature>
<feature type="turn" evidence="5">
    <location>
        <begin position="26"/>
        <end position="28"/>
    </location>
</feature>
<feature type="strand" evidence="5">
    <location>
        <begin position="29"/>
        <end position="35"/>
    </location>
</feature>
<feature type="helix" evidence="5">
    <location>
        <begin position="36"/>
        <end position="38"/>
    </location>
</feature>
<feature type="helix" evidence="5">
    <location>
        <begin position="41"/>
        <end position="46"/>
    </location>
</feature>
<feature type="strand" evidence="5">
    <location>
        <begin position="50"/>
        <end position="59"/>
    </location>
</feature>
<feature type="turn" evidence="5">
    <location>
        <begin position="60"/>
        <end position="62"/>
    </location>
</feature>
<feature type="helix" evidence="5">
    <location>
        <begin position="68"/>
        <end position="78"/>
    </location>
</feature>
<feature type="strand" evidence="5">
    <location>
        <begin position="86"/>
        <end position="93"/>
    </location>
</feature>
<feature type="strand" evidence="5">
    <location>
        <begin position="97"/>
        <end position="99"/>
    </location>
</feature>
<feature type="helix" evidence="5">
    <location>
        <begin position="102"/>
        <end position="113"/>
    </location>
</feature>
<feature type="strand" evidence="5">
    <location>
        <begin position="123"/>
        <end position="126"/>
    </location>
</feature>
<feature type="helix" evidence="5">
    <location>
        <begin position="127"/>
        <end position="129"/>
    </location>
</feature>
<feature type="helix" evidence="5">
    <location>
        <begin position="133"/>
        <end position="148"/>
    </location>
</feature>
<evidence type="ECO:0000255" key="1">
    <source>
        <dbReference type="PROSITE-ProRule" id="PRU00088"/>
    </source>
</evidence>
<evidence type="ECO:0000269" key="2">
    <source>
    </source>
</evidence>
<evidence type="ECO:0000269" key="3">
    <source>
    </source>
</evidence>
<evidence type="ECO:0000305" key="4"/>
<evidence type="ECO:0007829" key="5">
    <source>
        <dbReference type="PDB" id="4OXX"/>
    </source>
</evidence>